<name>ISCS_RICCN</name>
<comment type="function">
    <text evidence="1">Master enzyme that delivers sulfur to a number of partners involved in Fe-S cluster assembly, tRNA modification or cofactor biosynthesis. Catalyzes the removal of elemental sulfur atoms from cysteine to produce alanine. Functions as a sulfur delivery protein for Fe-S cluster synthesis onto IscU, an Fe-S scaffold assembly protein, as well as other S acceptor proteins.</text>
</comment>
<comment type="catalytic activity">
    <reaction evidence="1">
        <text>(sulfur carrier)-H + L-cysteine = (sulfur carrier)-SH + L-alanine</text>
        <dbReference type="Rhea" id="RHEA:43892"/>
        <dbReference type="Rhea" id="RHEA-COMP:14737"/>
        <dbReference type="Rhea" id="RHEA-COMP:14739"/>
        <dbReference type="ChEBI" id="CHEBI:29917"/>
        <dbReference type="ChEBI" id="CHEBI:35235"/>
        <dbReference type="ChEBI" id="CHEBI:57972"/>
        <dbReference type="ChEBI" id="CHEBI:64428"/>
        <dbReference type="EC" id="2.8.1.7"/>
    </reaction>
</comment>
<comment type="cofactor">
    <cofactor evidence="1">
        <name>pyridoxal 5'-phosphate</name>
        <dbReference type="ChEBI" id="CHEBI:597326"/>
    </cofactor>
</comment>
<comment type="pathway">
    <text evidence="1">Cofactor biosynthesis; iron-sulfur cluster biosynthesis.</text>
</comment>
<comment type="subunit">
    <text evidence="1">Homodimer. Forms a heterotetramer with IscU, interacts with other sulfur acceptors.</text>
</comment>
<comment type="subcellular location">
    <subcellularLocation>
        <location evidence="1">Cytoplasm</location>
    </subcellularLocation>
</comment>
<comment type="similarity">
    <text evidence="1">Belongs to the class-V pyridoxal-phosphate-dependent aminotransferase family. NifS/IscS subfamily.</text>
</comment>
<organism>
    <name type="scientific">Rickettsia conorii (strain ATCC VR-613 / Malish 7)</name>
    <dbReference type="NCBI Taxonomy" id="272944"/>
    <lineage>
        <taxon>Bacteria</taxon>
        <taxon>Pseudomonadati</taxon>
        <taxon>Pseudomonadota</taxon>
        <taxon>Alphaproteobacteria</taxon>
        <taxon>Rickettsiales</taxon>
        <taxon>Rickettsiaceae</taxon>
        <taxon>Rickettsieae</taxon>
        <taxon>Rickettsia</taxon>
        <taxon>spotted fever group</taxon>
    </lineage>
</organism>
<accession>Q92HP1</accession>
<evidence type="ECO:0000255" key="1">
    <source>
        <dbReference type="HAMAP-Rule" id="MF_00331"/>
    </source>
</evidence>
<protein>
    <recommendedName>
        <fullName evidence="1">Cysteine desulfurase IscS</fullName>
        <ecNumber evidence="1">2.8.1.7</ecNumber>
    </recommendedName>
</protein>
<gene>
    <name evidence="1" type="primary">iscS</name>
    <name type="synonym">spl1</name>
    <name type="ordered locus">RC0731</name>
</gene>
<keyword id="KW-0001">2Fe-2S</keyword>
<keyword id="KW-0963">Cytoplasm</keyword>
<keyword id="KW-0408">Iron</keyword>
<keyword id="KW-0411">Iron-sulfur</keyword>
<keyword id="KW-0479">Metal-binding</keyword>
<keyword id="KW-0663">Pyridoxal phosphate</keyword>
<keyword id="KW-0808">Transferase</keyword>
<reference key="1">
    <citation type="journal article" date="2001" name="Science">
        <title>Mechanisms of evolution in Rickettsia conorii and R. prowazekii.</title>
        <authorList>
            <person name="Ogata H."/>
            <person name="Audic S."/>
            <person name="Renesto-Audiffren P."/>
            <person name="Fournier P.-E."/>
            <person name="Barbe V."/>
            <person name="Samson D."/>
            <person name="Roux V."/>
            <person name="Cossart P."/>
            <person name="Weissenbach J."/>
            <person name="Claverie J.-M."/>
            <person name="Raoult D."/>
        </authorList>
    </citation>
    <scope>NUCLEOTIDE SEQUENCE [LARGE SCALE GENOMIC DNA]</scope>
    <source>
        <strain>ATCC VR-613 / Malish 7</strain>
    </source>
</reference>
<sequence length="410" mass="45475">MNPQLNNLTLPIYMDYQATTPIDPRVMEAMLPYFTTKFGNPHSRSHSFGWEAENAVEEARSMVAKLIGADTKEIIFTSGATESNNLAIKGIAKFYSNKKNHIITVVSEHKCVLDACRHLEQEGIKITYLPIKPNGIIDLETLKNAITDQTMLVSVMVVNNEIGVVQPLKEIGKICREKGVFFHSDIAQGFGKIPIDVNAFNIDLASISGHKIYGPKGIGALYVRKKPRVRVTPLINGGGQERGMRSGTLPTPLIVGLGMAAEIAYSEMEKDTKHVNYLFDRFLNNIHKRISEVYLNGDKNQRYKGNLNLSFAGVEGESMILAIKDLAVSSGSACTSASLEPSYVLRSMGIGEELAHTAIRFGIGRFTTEQEVDYAVNLICSKIDKLRELSPLWEMMQEGIDLKKIKWAVH</sequence>
<feature type="chain" id="PRO_0000150275" description="Cysteine desulfurase IscS">
    <location>
        <begin position="1"/>
        <end position="410"/>
    </location>
</feature>
<feature type="active site" description="Cysteine persulfide intermediate" evidence="1">
    <location>
        <position position="334"/>
    </location>
</feature>
<feature type="binding site" evidence="1">
    <location>
        <begin position="80"/>
        <end position="81"/>
    </location>
    <ligand>
        <name>pyridoxal 5'-phosphate</name>
        <dbReference type="ChEBI" id="CHEBI:597326"/>
    </ligand>
</feature>
<feature type="binding site" evidence="1">
    <location>
        <position position="160"/>
    </location>
    <ligand>
        <name>pyridoxal 5'-phosphate</name>
        <dbReference type="ChEBI" id="CHEBI:597326"/>
    </ligand>
</feature>
<feature type="binding site" evidence="1">
    <location>
        <position position="188"/>
    </location>
    <ligand>
        <name>pyridoxal 5'-phosphate</name>
        <dbReference type="ChEBI" id="CHEBI:597326"/>
    </ligand>
</feature>
<feature type="binding site" evidence="1">
    <location>
        <begin position="208"/>
        <end position="210"/>
    </location>
    <ligand>
        <name>pyridoxal 5'-phosphate</name>
        <dbReference type="ChEBI" id="CHEBI:597326"/>
    </ligand>
</feature>
<feature type="binding site" evidence="1">
    <location>
        <position position="248"/>
    </location>
    <ligand>
        <name>pyridoxal 5'-phosphate</name>
        <dbReference type="ChEBI" id="CHEBI:597326"/>
    </ligand>
</feature>
<feature type="binding site" description="via persulfide group" evidence="1">
    <location>
        <position position="334"/>
    </location>
    <ligand>
        <name>[2Fe-2S] cluster</name>
        <dbReference type="ChEBI" id="CHEBI:190135"/>
        <note>ligand shared with IscU</note>
    </ligand>
</feature>
<feature type="modified residue" description="N6-(pyridoxal phosphate)lysine" evidence="1">
    <location>
        <position position="211"/>
    </location>
</feature>
<proteinExistence type="inferred from homology"/>
<dbReference type="EC" id="2.8.1.7" evidence="1"/>
<dbReference type="EMBL" id="AE006914">
    <property type="protein sequence ID" value="AAL03268.1"/>
    <property type="molecule type" value="Genomic_DNA"/>
</dbReference>
<dbReference type="PIR" id="B97791">
    <property type="entry name" value="B97791"/>
</dbReference>
<dbReference type="RefSeq" id="WP_010977349.1">
    <property type="nucleotide sequence ID" value="NC_003103.1"/>
</dbReference>
<dbReference type="SMR" id="Q92HP1"/>
<dbReference type="KEGG" id="rco:RC0730"/>
<dbReference type="HOGENOM" id="CLU_003433_0_2_5"/>
<dbReference type="UniPathway" id="UPA00266"/>
<dbReference type="Proteomes" id="UP000000816">
    <property type="component" value="Chromosome"/>
</dbReference>
<dbReference type="GO" id="GO:1990221">
    <property type="term" value="C:L-cysteine desulfurase complex"/>
    <property type="evidence" value="ECO:0007669"/>
    <property type="project" value="UniProtKB-ARBA"/>
</dbReference>
<dbReference type="GO" id="GO:0051537">
    <property type="term" value="F:2 iron, 2 sulfur cluster binding"/>
    <property type="evidence" value="ECO:0007669"/>
    <property type="project" value="UniProtKB-UniRule"/>
</dbReference>
<dbReference type="GO" id="GO:0031071">
    <property type="term" value="F:cysteine desulfurase activity"/>
    <property type="evidence" value="ECO:0007669"/>
    <property type="project" value="UniProtKB-UniRule"/>
</dbReference>
<dbReference type="GO" id="GO:0046872">
    <property type="term" value="F:metal ion binding"/>
    <property type="evidence" value="ECO:0007669"/>
    <property type="project" value="UniProtKB-KW"/>
</dbReference>
<dbReference type="GO" id="GO:0030170">
    <property type="term" value="F:pyridoxal phosphate binding"/>
    <property type="evidence" value="ECO:0007669"/>
    <property type="project" value="UniProtKB-UniRule"/>
</dbReference>
<dbReference type="GO" id="GO:0044571">
    <property type="term" value="P:[2Fe-2S] cluster assembly"/>
    <property type="evidence" value="ECO:0007669"/>
    <property type="project" value="UniProtKB-UniRule"/>
</dbReference>
<dbReference type="FunFam" id="3.40.640.10:FF:000003">
    <property type="entry name" value="Cysteine desulfurase IscS"/>
    <property type="match status" value="1"/>
</dbReference>
<dbReference type="FunFam" id="3.90.1150.10:FF:000002">
    <property type="entry name" value="Cysteine desulfurase IscS"/>
    <property type="match status" value="1"/>
</dbReference>
<dbReference type="Gene3D" id="3.90.1150.10">
    <property type="entry name" value="Aspartate Aminotransferase, domain 1"/>
    <property type="match status" value="1"/>
</dbReference>
<dbReference type="Gene3D" id="3.40.640.10">
    <property type="entry name" value="Type I PLP-dependent aspartate aminotransferase-like (Major domain)"/>
    <property type="match status" value="1"/>
</dbReference>
<dbReference type="HAMAP" id="MF_00331">
    <property type="entry name" value="Cys_desulf_IscS"/>
    <property type="match status" value="1"/>
</dbReference>
<dbReference type="InterPro" id="IPR000192">
    <property type="entry name" value="Aminotrans_V_dom"/>
</dbReference>
<dbReference type="InterPro" id="IPR020578">
    <property type="entry name" value="Aminotrans_V_PyrdxlP_BS"/>
</dbReference>
<dbReference type="InterPro" id="IPR010240">
    <property type="entry name" value="Cys_deSase_IscS"/>
</dbReference>
<dbReference type="InterPro" id="IPR016454">
    <property type="entry name" value="Cysteine_dSase"/>
</dbReference>
<dbReference type="InterPro" id="IPR015424">
    <property type="entry name" value="PyrdxlP-dep_Trfase"/>
</dbReference>
<dbReference type="InterPro" id="IPR015421">
    <property type="entry name" value="PyrdxlP-dep_Trfase_major"/>
</dbReference>
<dbReference type="InterPro" id="IPR015422">
    <property type="entry name" value="PyrdxlP-dep_Trfase_small"/>
</dbReference>
<dbReference type="NCBIfam" id="TIGR02006">
    <property type="entry name" value="IscS"/>
    <property type="match status" value="1"/>
</dbReference>
<dbReference type="NCBIfam" id="NF002806">
    <property type="entry name" value="PRK02948.1"/>
    <property type="match status" value="1"/>
</dbReference>
<dbReference type="NCBIfam" id="NF010611">
    <property type="entry name" value="PRK14012.1"/>
    <property type="match status" value="1"/>
</dbReference>
<dbReference type="PANTHER" id="PTHR11601:SF34">
    <property type="entry name" value="CYSTEINE DESULFURASE"/>
    <property type="match status" value="1"/>
</dbReference>
<dbReference type="PANTHER" id="PTHR11601">
    <property type="entry name" value="CYSTEINE DESULFURYLASE FAMILY MEMBER"/>
    <property type="match status" value="1"/>
</dbReference>
<dbReference type="Pfam" id="PF00266">
    <property type="entry name" value="Aminotran_5"/>
    <property type="match status" value="1"/>
</dbReference>
<dbReference type="PIRSF" id="PIRSF005572">
    <property type="entry name" value="NifS"/>
    <property type="match status" value="1"/>
</dbReference>
<dbReference type="SUPFAM" id="SSF53383">
    <property type="entry name" value="PLP-dependent transferases"/>
    <property type="match status" value="1"/>
</dbReference>
<dbReference type="PROSITE" id="PS00595">
    <property type="entry name" value="AA_TRANSFER_CLASS_5"/>
    <property type="match status" value="1"/>
</dbReference>